<feature type="chain" id="PRO_1000056337" description="Beta-ketoacyl-[acyl-carrier-protein] synthase III">
    <location>
        <begin position="1"/>
        <end position="324"/>
    </location>
</feature>
<feature type="region of interest" description="ACP-binding" evidence="1">
    <location>
        <begin position="247"/>
        <end position="251"/>
    </location>
</feature>
<feature type="active site" evidence="1">
    <location>
        <position position="114"/>
    </location>
</feature>
<feature type="active site" evidence="1">
    <location>
        <position position="246"/>
    </location>
</feature>
<feature type="active site" evidence="1">
    <location>
        <position position="276"/>
    </location>
</feature>
<comment type="function">
    <text evidence="1">Catalyzes the condensation reaction of fatty acid synthesis by the addition to an acyl acceptor of two carbons from malonyl-ACP. Catalyzes the first condensation reaction which initiates fatty acid synthesis and may therefore play a role in governing the total rate of fatty acid production. Possesses both acetoacetyl-ACP synthase and acetyl transacylase activities. Its substrate specificity determines the biosynthesis of branched-chain and/or straight-chain of fatty acids.</text>
</comment>
<comment type="catalytic activity">
    <reaction evidence="1">
        <text>malonyl-[ACP] + acetyl-CoA + H(+) = 3-oxobutanoyl-[ACP] + CO2 + CoA</text>
        <dbReference type="Rhea" id="RHEA:12080"/>
        <dbReference type="Rhea" id="RHEA-COMP:9623"/>
        <dbReference type="Rhea" id="RHEA-COMP:9625"/>
        <dbReference type="ChEBI" id="CHEBI:15378"/>
        <dbReference type="ChEBI" id="CHEBI:16526"/>
        <dbReference type="ChEBI" id="CHEBI:57287"/>
        <dbReference type="ChEBI" id="CHEBI:57288"/>
        <dbReference type="ChEBI" id="CHEBI:78449"/>
        <dbReference type="ChEBI" id="CHEBI:78450"/>
        <dbReference type="EC" id="2.3.1.180"/>
    </reaction>
</comment>
<comment type="pathway">
    <text evidence="1">Lipid metabolism; fatty acid biosynthesis.</text>
</comment>
<comment type="subunit">
    <text evidence="1">Homodimer.</text>
</comment>
<comment type="subcellular location">
    <subcellularLocation>
        <location evidence="1">Cytoplasm</location>
    </subcellularLocation>
</comment>
<comment type="domain">
    <text evidence="1">The last Arg residue of the ACP-binding site is essential for the weak association between ACP/AcpP and FabH.</text>
</comment>
<comment type="similarity">
    <text evidence="1">Belongs to the thiolase-like superfamily. FabH family.</text>
</comment>
<reference key="1">
    <citation type="submission" date="2006-12" db="EMBL/GenBank/DDBJ databases">
        <authorList>
            <person name="Fouts D.E."/>
            <person name="Nelson K.E."/>
            <person name="Sebastian Y."/>
        </authorList>
    </citation>
    <scope>NUCLEOTIDE SEQUENCE [LARGE SCALE GENOMIC DNA]</scope>
    <source>
        <strain>81-176</strain>
    </source>
</reference>
<gene>
    <name evidence="1" type="primary">fabH</name>
    <name type="ordered locus">CJJ81176_0350</name>
</gene>
<evidence type="ECO:0000255" key="1">
    <source>
        <dbReference type="HAMAP-Rule" id="MF_01815"/>
    </source>
</evidence>
<accession>A1VY47</accession>
<keyword id="KW-0012">Acyltransferase</keyword>
<keyword id="KW-0963">Cytoplasm</keyword>
<keyword id="KW-0275">Fatty acid biosynthesis</keyword>
<keyword id="KW-0276">Fatty acid metabolism</keyword>
<keyword id="KW-0444">Lipid biosynthesis</keyword>
<keyword id="KW-0443">Lipid metabolism</keyword>
<keyword id="KW-0511">Multifunctional enzyme</keyword>
<keyword id="KW-0808">Transferase</keyword>
<protein>
    <recommendedName>
        <fullName evidence="1">Beta-ketoacyl-[acyl-carrier-protein] synthase III</fullName>
        <shortName evidence="1">Beta-ketoacyl-ACP synthase III</shortName>
        <shortName evidence="1">KAS III</shortName>
        <ecNumber evidence="1">2.3.1.180</ecNumber>
    </recommendedName>
    <alternativeName>
        <fullName evidence="1">3-oxoacyl-[acyl-carrier-protein] synthase 3</fullName>
    </alternativeName>
    <alternativeName>
        <fullName evidence="1">3-oxoacyl-[acyl-carrier-protein] synthase III</fullName>
    </alternativeName>
</protein>
<organism>
    <name type="scientific">Campylobacter jejuni subsp. jejuni serotype O:23/36 (strain 81-176)</name>
    <dbReference type="NCBI Taxonomy" id="354242"/>
    <lineage>
        <taxon>Bacteria</taxon>
        <taxon>Pseudomonadati</taxon>
        <taxon>Campylobacterota</taxon>
        <taxon>Epsilonproteobacteria</taxon>
        <taxon>Campylobacterales</taxon>
        <taxon>Campylobacteraceae</taxon>
        <taxon>Campylobacter</taxon>
    </lineage>
</organism>
<proteinExistence type="inferred from homology"/>
<dbReference type="EC" id="2.3.1.180" evidence="1"/>
<dbReference type="EMBL" id="CP000538">
    <property type="protein sequence ID" value="EAQ73083.1"/>
    <property type="molecule type" value="Genomic_DNA"/>
</dbReference>
<dbReference type="RefSeq" id="WP_002858639.1">
    <property type="nucleotide sequence ID" value="NC_008787.1"/>
</dbReference>
<dbReference type="SMR" id="A1VY47"/>
<dbReference type="KEGG" id="cjj:CJJ81176_0350"/>
<dbReference type="eggNOG" id="COG0332">
    <property type="taxonomic scope" value="Bacteria"/>
</dbReference>
<dbReference type="HOGENOM" id="CLU_039592_4_0_7"/>
<dbReference type="UniPathway" id="UPA00094"/>
<dbReference type="Proteomes" id="UP000000646">
    <property type="component" value="Chromosome"/>
</dbReference>
<dbReference type="GO" id="GO:0005737">
    <property type="term" value="C:cytoplasm"/>
    <property type="evidence" value="ECO:0007669"/>
    <property type="project" value="UniProtKB-SubCell"/>
</dbReference>
<dbReference type="GO" id="GO:0004315">
    <property type="term" value="F:3-oxoacyl-[acyl-carrier-protein] synthase activity"/>
    <property type="evidence" value="ECO:0007669"/>
    <property type="project" value="InterPro"/>
</dbReference>
<dbReference type="GO" id="GO:0033818">
    <property type="term" value="F:beta-ketoacyl-acyl-carrier-protein synthase III activity"/>
    <property type="evidence" value="ECO:0007669"/>
    <property type="project" value="UniProtKB-UniRule"/>
</dbReference>
<dbReference type="GO" id="GO:0006633">
    <property type="term" value="P:fatty acid biosynthetic process"/>
    <property type="evidence" value="ECO:0007669"/>
    <property type="project" value="UniProtKB-UniRule"/>
</dbReference>
<dbReference type="GO" id="GO:0044550">
    <property type="term" value="P:secondary metabolite biosynthetic process"/>
    <property type="evidence" value="ECO:0007669"/>
    <property type="project" value="TreeGrafter"/>
</dbReference>
<dbReference type="CDD" id="cd00830">
    <property type="entry name" value="KAS_III"/>
    <property type="match status" value="1"/>
</dbReference>
<dbReference type="FunFam" id="3.40.47.10:FF:000004">
    <property type="entry name" value="3-oxoacyl-[acyl-carrier-protein] synthase 3"/>
    <property type="match status" value="1"/>
</dbReference>
<dbReference type="Gene3D" id="3.40.47.10">
    <property type="match status" value="1"/>
</dbReference>
<dbReference type="HAMAP" id="MF_01815">
    <property type="entry name" value="FabH"/>
    <property type="match status" value="1"/>
</dbReference>
<dbReference type="InterPro" id="IPR013747">
    <property type="entry name" value="ACP_syn_III_C"/>
</dbReference>
<dbReference type="InterPro" id="IPR013751">
    <property type="entry name" value="ACP_syn_III_N"/>
</dbReference>
<dbReference type="InterPro" id="IPR004655">
    <property type="entry name" value="FabH"/>
</dbReference>
<dbReference type="InterPro" id="IPR016039">
    <property type="entry name" value="Thiolase-like"/>
</dbReference>
<dbReference type="NCBIfam" id="TIGR00747">
    <property type="entry name" value="fabH"/>
    <property type="match status" value="1"/>
</dbReference>
<dbReference type="NCBIfam" id="NF006829">
    <property type="entry name" value="PRK09352.1"/>
    <property type="match status" value="1"/>
</dbReference>
<dbReference type="PANTHER" id="PTHR34069">
    <property type="entry name" value="3-OXOACYL-[ACYL-CARRIER-PROTEIN] SYNTHASE 3"/>
    <property type="match status" value="1"/>
</dbReference>
<dbReference type="PANTHER" id="PTHR34069:SF2">
    <property type="entry name" value="BETA-KETOACYL-[ACYL-CARRIER-PROTEIN] SYNTHASE III"/>
    <property type="match status" value="1"/>
</dbReference>
<dbReference type="Pfam" id="PF08545">
    <property type="entry name" value="ACP_syn_III"/>
    <property type="match status" value="1"/>
</dbReference>
<dbReference type="Pfam" id="PF08541">
    <property type="entry name" value="ACP_syn_III_C"/>
    <property type="match status" value="1"/>
</dbReference>
<dbReference type="SUPFAM" id="SSF53901">
    <property type="entry name" value="Thiolase-like"/>
    <property type="match status" value="1"/>
</dbReference>
<sequence length="324" mass="35165">MLKASLKSIASYIPEKILSNADLEKMVDTTDEWITRRTGIKERRIASENENTSDLGTKAALKAIERANLKPEDIDAILVATLSPDYFTMPSTACKIASNLGLVNISAFDISAACSGFIYLLEQAKALVESGLKKNVLIIGAEKTSSIMDYNDRSICILFGDGAGAGVVSLDNENHILDVHTASNGNYGDLLMTQRSQKSSLCQTLSMQMKGNEVFKIAVNTLSNDVVEILAKNNILAQEIDLFIPHQANLRIIKAVQEKLNLSDEKCVITVQKYGNTSAASIPMAMNDAYEEGRLKKGNLILLDAFGGGFTWGSALLKFGGENF</sequence>
<name>FABH_CAMJJ</name>